<keyword id="KW-0017">Alkaloid metabolism</keyword>
<keyword id="KW-1015">Disulfide bond</keyword>
<keyword id="KW-0274">FAD</keyword>
<keyword id="KW-0285">Flavoprotein</keyword>
<keyword id="KW-0325">Glycoprotein</keyword>
<keyword id="KW-0560">Oxidoreductase</keyword>
<keyword id="KW-1185">Reference proteome</keyword>
<keyword id="KW-0732">Signal</keyword>
<keyword id="KW-0926">Vacuole</keyword>
<evidence type="ECO:0000250" key="1">
    <source>
        <dbReference type="UniProtKB" id="F1T160"/>
    </source>
</evidence>
<evidence type="ECO:0000250" key="2">
    <source>
        <dbReference type="UniProtKB" id="O64743"/>
    </source>
</evidence>
<evidence type="ECO:0000250" key="3">
    <source>
        <dbReference type="UniProtKB" id="Q9FI21"/>
    </source>
</evidence>
<evidence type="ECO:0000255" key="4"/>
<evidence type="ECO:0000255" key="5">
    <source>
        <dbReference type="PROSITE-ProRule" id="PRU00498"/>
    </source>
</evidence>
<evidence type="ECO:0000255" key="6">
    <source>
        <dbReference type="PROSITE-ProRule" id="PRU00718"/>
    </source>
</evidence>
<evidence type="ECO:0000305" key="7"/>
<evidence type="ECO:0000312" key="8">
    <source>
        <dbReference type="RefSeq" id="XP_016466471.1"/>
    </source>
</evidence>
<comment type="function">
    <text evidence="1">Involved in the biosynthesis of pyridine alkaloid natural products, leading mainly to the production of anabasine, anatabine, nicotine and nornicotine, effective deterrents against herbivores with antiparasitic and pesticide properties (neurotoxins); nornicotine serves as the precursor in the synthesis of the carcinogen compound N'-nitrosonornicotine (NNN) (By similarity). Catalyzes a late oxidation step subsequent to the pyridine ring condensation reaction in the biosynthesis of alkaloids (By similarity).</text>
</comment>
<comment type="cofactor">
    <cofactor evidence="1">
        <name>FAD</name>
        <dbReference type="ChEBI" id="CHEBI:57692"/>
    </cofactor>
</comment>
<comment type="pathway">
    <text evidence="1">Alkaloid biosynthesis; nicotine biosynthesis.</text>
</comment>
<comment type="subcellular location">
    <subcellularLocation>
        <location evidence="1">Vacuole</location>
    </subcellularLocation>
</comment>
<comment type="similarity">
    <text evidence="7">Belongs to the oxygen-dependent FAD-linked oxidoreductase family.</text>
</comment>
<proteinExistence type="inferred from homology"/>
<name>BBLC2_TOBAC</name>
<accession>A0A1S3ZQ17</accession>
<feature type="signal peptide" evidence="4">
    <location>
        <begin position="1"/>
        <end position="17"/>
    </location>
</feature>
<feature type="chain" id="PRO_5010190032" description="Berberine bridge enzyme-like C-2">
    <location>
        <begin position="18"/>
        <end position="565"/>
    </location>
</feature>
<feature type="domain" description="FAD-binding PCMH-type" evidence="6">
    <location>
        <begin position="72"/>
        <end position="248"/>
    </location>
</feature>
<feature type="modified residue" description="Pros-8alpha-FAD histidine" evidence="3">
    <location>
        <position position="109"/>
    </location>
</feature>
<feature type="glycosylation site" description="N-linked (GlcNAc...) asparagine" evidence="5">
    <location>
        <position position="28"/>
    </location>
</feature>
<feature type="glycosylation site" description="N-linked (GlcNAc...) asparagine" evidence="5">
    <location>
        <position position="40"/>
    </location>
</feature>
<feature type="glycosylation site" description="N-linked (GlcNAc...) asparagine" evidence="5">
    <location>
        <position position="363"/>
    </location>
</feature>
<feature type="glycosylation site" description="N-linked (GlcNAc...) asparagine" evidence="5">
    <location>
        <position position="502"/>
    </location>
</feature>
<feature type="disulfide bond" evidence="2">
    <location>
        <begin position="32"/>
        <end position="94"/>
    </location>
</feature>
<gene>
    <name evidence="8" type="ORF">LOC107789210</name>
</gene>
<reference key="1">
    <citation type="journal article" date="2014" name="Nat. Commun.">
        <title>The tobacco genome sequence and its comparison with those of tomato and potato.</title>
        <authorList>
            <person name="Sierro N."/>
            <person name="Battey J.N."/>
            <person name="Ouadi S."/>
            <person name="Bakaher N."/>
            <person name="Bovet L."/>
            <person name="Willig A."/>
            <person name="Goepfert S."/>
            <person name="Peitsch M.C."/>
            <person name="Ivanov N.V."/>
        </authorList>
    </citation>
    <scope>NUCLEOTIDE SEQUENCE [LARGE SCALE GENOMIC DNA]</scope>
    <source>
        <strain>cv. TN90</strain>
    </source>
</reference>
<reference key="2">
    <citation type="journal article" date="2013" name="Phytochemistry">
        <title>Molecular genetics of alkaloid biosynthesis in Nicotiana tabacum.</title>
        <authorList>
            <person name="Dewey R.E."/>
            <person name="Xie J."/>
        </authorList>
    </citation>
    <scope>REVIEW ON ALKALOID BIOSYNTHESIS IN NICOTIANA TABACUM</scope>
</reference>
<reference key="3">
    <citation type="journal article" date="2015" name="Mol. Genet. Genomics">
        <title>Current status and prospects for the study of Nicotiana genomics, genetics, and nicotine biosynthesis genes.</title>
        <authorList>
            <person name="Wang X."/>
            <person name="Bennetzen J.L."/>
        </authorList>
    </citation>
    <scope>REVIEW ON NICOTINE BIOSYNTHESIS</scope>
</reference>
<organism>
    <name type="scientific">Nicotiana tabacum</name>
    <name type="common">Common tobacco</name>
    <dbReference type="NCBI Taxonomy" id="4097"/>
    <lineage>
        <taxon>Eukaryota</taxon>
        <taxon>Viridiplantae</taxon>
        <taxon>Streptophyta</taxon>
        <taxon>Embryophyta</taxon>
        <taxon>Tracheophyta</taxon>
        <taxon>Spermatophyta</taxon>
        <taxon>Magnoliopsida</taxon>
        <taxon>eudicotyledons</taxon>
        <taxon>Gunneridae</taxon>
        <taxon>Pentapetalae</taxon>
        <taxon>asterids</taxon>
        <taxon>lamiids</taxon>
        <taxon>Solanales</taxon>
        <taxon>Solanaceae</taxon>
        <taxon>Nicotianoideae</taxon>
        <taxon>Nicotianeae</taxon>
        <taxon>Nicotiana</taxon>
    </lineage>
</organism>
<dbReference type="EC" id="1.1.1.-" evidence="2"/>
<dbReference type="RefSeq" id="XP_016466471.1">
    <property type="nucleotide sequence ID" value="XM_016610985.1"/>
</dbReference>
<dbReference type="SMR" id="A0A1S3ZQ17"/>
<dbReference type="STRING" id="4097.A0A1S3ZQ17"/>
<dbReference type="PaxDb" id="4097-A0A1S3ZQ17"/>
<dbReference type="GeneID" id="107789210"/>
<dbReference type="KEGG" id="nta:107789210"/>
<dbReference type="OMA" id="QVYWDED"/>
<dbReference type="OrthoDB" id="407275at2759"/>
<dbReference type="UniPathway" id="UPA00107"/>
<dbReference type="Proteomes" id="UP000084051">
    <property type="component" value="Unplaced"/>
</dbReference>
<dbReference type="GO" id="GO:0005773">
    <property type="term" value="C:vacuole"/>
    <property type="evidence" value="ECO:0007669"/>
    <property type="project" value="UniProtKB-SubCell"/>
</dbReference>
<dbReference type="GO" id="GO:0071949">
    <property type="term" value="F:FAD binding"/>
    <property type="evidence" value="ECO:0007669"/>
    <property type="project" value="InterPro"/>
</dbReference>
<dbReference type="GO" id="GO:0016491">
    <property type="term" value="F:oxidoreductase activity"/>
    <property type="evidence" value="ECO:0007669"/>
    <property type="project" value="UniProtKB-KW"/>
</dbReference>
<dbReference type="GO" id="GO:0009820">
    <property type="term" value="P:alkaloid metabolic process"/>
    <property type="evidence" value="ECO:0007669"/>
    <property type="project" value="UniProtKB-KW"/>
</dbReference>
<dbReference type="GO" id="GO:0042179">
    <property type="term" value="P:nicotine biosynthetic process"/>
    <property type="evidence" value="ECO:0007669"/>
    <property type="project" value="UniProtKB-UniPathway"/>
</dbReference>
<dbReference type="Gene3D" id="3.30.465.10">
    <property type="match status" value="1"/>
</dbReference>
<dbReference type="Gene3D" id="3.40.462.20">
    <property type="match status" value="1"/>
</dbReference>
<dbReference type="Gene3D" id="3.30.43.10">
    <property type="entry name" value="Uridine Diphospho-n-acetylenolpyruvylglucosamine Reductase, domain 2"/>
    <property type="match status" value="1"/>
</dbReference>
<dbReference type="InterPro" id="IPR012951">
    <property type="entry name" value="BBE"/>
</dbReference>
<dbReference type="InterPro" id="IPR016166">
    <property type="entry name" value="FAD-bd_PCMH"/>
</dbReference>
<dbReference type="InterPro" id="IPR036318">
    <property type="entry name" value="FAD-bd_PCMH-like_sf"/>
</dbReference>
<dbReference type="InterPro" id="IPR016167">
    <property type="entry name" value="FAD-bd_PCMH_sub1"/>
</dbReference>
<dbReference type="InterPro" id="IPR016169">
    <property type="entry name" value="FAD-bd_PCMH_sub2"/>
</dbReference>
<dbReference type="InterPro" id="IPR006094">
    <property type="entry name" value="Oxid_FAD_bind_N"/>
</dbReference>
<dbReference type="PANTHER" id="PTHR32448">
    <property type="entry name" value="OS08G0158400 PROTEIN"/>
    <property type="match status" value="1"/>
</dbReference>
<dbReference type="Pfam" id="PF08031">
    <property type="entry name" value="BBE"/>
    <property type="match status" value="1"/>
</dbReference>
<dbReference type="Pfam" id="PF01565">
    <property type="entry name" value="FAD_binding_4"/>
    <property type="match status" value="1"/>
</dbReference>
<dbReference type="SUPFAM" id="SSF56176">
    <property type="entry name" value="FAD-binding/transporter-associated domain-like"/>
    <property type="match status" value="1"/>
</dbReference>
<dbReference type="PROSITE" id="PS51387">
    <property type="entry name" value="FAD_PCMH"/>
    <property type="match status" value="1"/>
</dbReference>
<protein>
    <recommendedName>
        <fullName evidence="7">Berberine bridge enzyme-like C-2</fullName>
        <ecNumber evidence="2">1.1.1.-</ecNumber>
    </recommendedName>
</protein>
<sequence>MFPIIILISFSFTFLFASVTSGAGGVTNLSTCLINHNVHNFSIYPTKNDQSSSNYFNLLDFSLQNLRFAASYMPKPTVIILPNSKEELVSTILCCRQTSYEIRVRCGGHSYEGTSYVSFDGSPFVIVDLMKLDDVSVDLDSETAWAQGGATIGQIYYAISRVSDVHAFSAGSGPTVGSGGHISGGGFGLMSRKFGLAADSVVDALLIDAEGRLLDRKAMGEDVFWAIRGGGGGNWGIIYAWKIRLLKVPKIVTTCMIYRPGSKQYVAQLLQKWQIVTPNLADDFTLGVLMRPIDLRADMNYGNTTPIETFPQFNALYLGPKTEAVSILNEAFPELDAKNDDAKEMTWIESALFFSELDNVFGNSSDDISRLKERYMDAKTFFKGKSDFVKTPFSMDAMMTALVELEKNPKSFLVFDPYGGVMDKISDQAIAFPHRKGNLFAVQYYAFWNEEDDAKSNEYIEWTRGFYNKMAPFVSSSPRGAYINYLDMDLGVNMDDDYLLRNASSRSSSSSVDAVERARAWGEMYFLHNYDRLVKAKTQIDPLNVFRHEQSIPPMLGSTQEHSSE</sequence>